<dbReference type="EC" id="4.2.1.17" evidence="1"/>
<dbReference type="EC" id="5.1.2.3" evidence="1"/>
<dbReference type="EC" id="5.3.3.8" evidence="1"/>
<dbReference type="EC" id="1.1.1.35" evidence="1"/>
<dbReference type="EMBL" id="CR378663">
    <property type="protein sequence ID" value="CAG18519.1"/>
    <property type="molecule type" value="Genomic_DNA"/>
</dbReference>
<dbReference type="RefSeq" id="WP_011216900.1">
    <property type="nucleotide sequence ID" value="NC_006370.1"/>
</dbReference>
<dbReference type="SMR" id="Q6LW06"/>
<dbReference type="STRING" id="298386.PBPRA0064"/>
<dbReference type="KEGG" id="ppr:PBPRA0064"/>
<dbReference type="eggNOG" id="COG1024">
    <property type="taxonomic scope" value="Bacteria"/>
</dbReference>
<dbReference type="eggNOG" id="COG1250">
    <property type="taxonomic scope" value="Bacteria"/>
</dbReference>
<dbReference type="HOGENOM" id="CLU_009834_16_3_6"/>
<dbReference type="UniPathway" id="UPA00659"/>
<dbReference type="Proteomes" id="UP000000593">
    <property type="component" value="Chromosome 1"/>
</dbReference>
<dbReference type="GO" id="GO:0036125">
    <property type="term" value="C:fatty acid beta-oxidation multienzyme complex"/>
    <property type="evidence" value="ECO:0007669"/>
    <property type="project" value="InterPro"/>
</dbReference>
<dbReference type="GO" id="GO:0008692">
    <property type="term" value="F:3-hydroxybutyryl-CoA epimerase activity"/>
    <property type="evidence" value="ECO:0007669"/>
    <property type="project" value="UniProtKB-UniRule"/>
</dbReference>
<dbReference type="GO" id="GO:0004165">
    <property type="term" value="F:delta(3)-delta(2)-enoyl-CoA isomerase activity"/>
    <property type="evidence" value="ECO:0007669"/>
    <property type="project" value="UniProtKB-UniRule"/>
</dbReference>
<dbReference type="GO" id="GO:0004300">
    <property type="term" value="F:enoyl-CoA hydratase activity"/>
    <property type="evidence" value="ECO:0007669"/>
    <property type="project" value="UniProtKB-UniRule"/>
</dbReference>
<dbReference type="GO" id="GO:0016509">
    <property type="term" value="F:long-chain-3-hydroxyacyl-CoA dehydrogenase activity"/>
    <property type="evidence" value="ECO:0007669"/>
    <property type="project" value="TreeGrafter"/>
</dbReference>
<dbReference type="GO" id="GO:0070403">
    <property type="term" value="F:NAD+ binding"/>
    <property type="evidence" value="ECO:0007669"/>
    <property type="project" value="InterPro"/>
</dbReference>
<dbReference type="GO" id="GO:0006635">
    <property type="term" value="P:fatty acid beta-oxidation"/>
    <property type="evidence" value="ECO:0007669"/>
    <property type="project" value="UniProtKB-UniRule"/>
</dbReference>
<dbReference type="CDD" id="cd06558">
    <property type="entry name" value="crotonase-like"/>
    <property type="match status" value="1"/>
</dbReference>
<dbReference type="FunFam" id="1.10.1040.50:FF:000001">
    <property type="entry name" value="Fatty acid oxidation complex subunit alpha"/>
    <property type="match status" value="1"/>
</dbReference>
<dbReference type="FunFam" id="3.40.50.720:FF:000009">
    <property type="entry name" value="Fatty oxidation complex, alpha subunit"/>
    <property type="match status" value="1"/>
</dbReference>
<dbReference type="Gene3D" id="1.10.1040.50">
    <property type="match status" value="1"/>
</dbReference>
<dbReference type="Gene3D" id="3.90.226.10">
    <property type="entry name" value="2-enoyl-CoA Hydratase, Chain A, domain 1"/>
    <property type="match status" value="1"/>
</dbReference>
<dbReference type="Gene3D" id="3.40.50.720">
    <property type="entry name" value="NAD(P)-binding Rossmann-like Domain"/>
    <property type="match status" value="1"/>
</dbReference>
<dbReference type="HAMAP" id="MF_01621">
    <property type="entry name" value="FadB"/>
    <property type="match status" value="1"/>
</dbReference>
<dbReference type="InterPro" id="IPR006180">
    <property type="entry name" value="3-OHacyl-CoA_DH_CS"/>
</dbReference>
<dbReference type="InterPro" id="IPR006176">
    <property type="entry name" value="3-OHacyl-CoA_DH_NAD-bd"/>
</dbReference>
<dbReference type="InterPro" id="IPR006108">
    <property type="entry name" value="3HC_DH_C"/>
</dbReference>
<dbReference type="InterPro" id="IPR008927">
    <property type="entry name" value="6-PGluconate_DH-like_C_sf"/>
</dbReference>
<dbReference type="InterPro" id="IPR029045">
    <property type="entry name" value="ClpP/crotonase-like_dom_sf"/>
</dbReference>
<dbReference type="InterPro" id="IPR018376">
    <property type="entry name" value="Enoyl-CoA_hyd/isom_CS"/>
</dbReference>
<dbReference type="InterPro" id="IPR001753">
    <property type="entry name" value="Enoyl-CoA_hydra/iso"/>
</dbReference>
<dbReference type="InterPro" id="IPR050136">
    <property type="entry name" value="FA_oxidation_alpha_subunit"/>
</dbReference>
<dbReference type="InterPro" id="IPR012799">
    <property type="entry name" value="FadB"/>
</dbReference>
<dbReference type="InterPro" id="IPR036291">
    <property type="entry name" value="NAD(P)-bd_dom_sf"/>
</dbReference>
<dbReference type="NCBIfam" id="TIGR02437">
    <property type="entry name" value="FadB"/>
    <property type="match status" value="1"/>
</dbReference>
<dbReference type="NCBIfam" id="NF008727">
    <property type="entry name" value="PRK11730.1"/>
    <property type="match status" value="1"/>
</dbReference>
<dbReference type="PANTHER" id="PTHR43612">
    <property type="entry name" value="TRIFUNCTIONAL ENZYME SUBUNIT ALPHA"/>
    <property type="match status" value="1"/>
</dbReference>
<dbReference type="PANTHER" id="PTHR43612:SF3">
    <property type="entry name" value="TRIFUNCTIONAL ENZYME SUBUNIT ALPHA, MITOCHONDRIAL"/>
    <property type="match status" value="1"/>
</dbReference>
<dbReference type="Pfam" id="PF00725">
    <property type="entry name" value="3HCDH"/>
    <property type="match status" value="2"/>
</dbReference>
<dbReference type="Pfam" id="PF02737">
    <property type="entry name" value="3HCDH_N"/>
    <property type="match status" value="1"/>
</dbReference>
<dbReference type="Pfam" id="PF00378">
    <property type="entry name" value="ECH_1"/>
    <property type="match status" value="1"/>
</dbReference>
<dbReference type="SUPFAM" id="SSF48179">
    <property type="entry name" value="6-phosphogluconate dehydrogenase C-terminal domain-like"/>
    <property type="match status" value="2"/>
</dbReference>
<dbReference type="SUPFAM" id="SSF52096">
    <property type="entry name" value="ClpP/crotonase"/>
    <property type="match status" value="1"/>
</dbReference>
<dbReference type="SUPFAM" id="SSF51735">
    <property type="entry name" value="NAD(P)-binding Rossmann-fold domains"/>
    <property type="match status" value="1"/>
</dbReference>
<dbReference type="PROSITE" id="PS00067">
    <property type="entry name" value="3HCDH"/>
    <property type="match status" value="1"/>
</dbReference>
<dbReference type="PROSITE" id="PS00166">
    <property type="entry name" value="ENOYL_COA_HYDRATASE"/>
    <property type="match status" value="1"/>
</dbReference>
<feature type="chain" id="PRO_0000109272" description="Fatty acid oxidation complex subunit alpha">
    <location>
        <begin position="1"/>
        <end position="720"/>
    </location>
</feature>
<feature type="region of interest" description="Enoyl-CoA hydratase/isomerase" evidence="1">
    <location>
        <begin position="1"/>
        <end position="189"/>
    </location>
</feature>
<feature type="region of interest" description="3-hydroxyacyl-CoA dehydrogenase" evidence="1">
    <location>
        <begin position="311"/>
        <end position="720"/>
    </location>
</feature>
<feature type="active site" description="For 3-hydroxyacyl-CoA dehydrogenase activity" evidence="1">
    <location>
        <position position="450"/>
    </location>
</feature>
<feature type="binding site" evidence="1">
    <location>
        <position position="296"/>
    </location>
    <ligand>
        <name>substrate</name>
    </ligand>
</feature>
<feature type="binding site" evidence="1">
    <location>
        <position position="324"/>
    </location>
    <ligand>
        <name>NAD(+)</name>
        <dbReference type="ChEBI" id="CHEBI:57540"/>
    </ligand>
</feature>
<feature type="binding site" evidence="1">
    <location>
        <position position="343"/>
    </location>
    <ligand>
        <name>NAD(+)</name>
        <dbReference type="ChEBI" id="CHEBI:57540"/>
    </ligand>
</feature>
<feature type="binding site" evidence="1">
    <location>
        <begin position="400"/>
        <end position="402"/>
    </location>
    <ligand>
        <name>NAD(+)</name>
        <dbReference type="ChEBI" id="CHEBI:57540"/>
    </ligand>
</feature>
<feature type="binding site" evidence="1">
    <location>
        <position position="407"/>
    </location>
    <ligand>
        <name>NAD(+)</name>
        <dbReference type="ChEBI" id="CHEBI:57540"/>
    </ligand>
</feature>
<feature type="binding site" evidence="1">
    <location>
        <position position="429"/>
    </location>
    <ligand>
        <name>NAD(+)</name>
        <dbReference type="ChEBI" id="CHEBI:57540"/>
    </ligand>
</feature>
<feature type="binding site" evidence="1">
    <location>
        <position position="453"/>
    </location>
    <ligand>
        <name>NAD(+)</name>
        <dbReference type="ChEBI" id="CHEBI:57540"/>
    </ligand>
</feature>
<feature type="binding site" evidence="1">
    <location>
        <position position="500"/>
    </location>
    <ligand>
        <name>substrate</name>
    </ligand>
</feature>
<feature type="binding site" evidence="1">
    <location>
        <position position="660"/>
    </location>
    <ligand>
        <name>substrate</name>
    </ligand>
</feature>
<feature type="site" description="Important for catalytic activity" evidence="1">
    <location>
        <position position="119"/>
    </location>
</feature>
<feature type="site" description="Important for catalytic activity" evidence="1">
    <location>
        <position position="139"/>
    </location>
</feature>
<gene>
    <name evidence="1" type="primary">fadB</name>
    <name type="ordered locus">PBPRA0064</name>
</gene>
<sequence>MIYQGETLSVRYLDDGIAELNLNAPGAVNKFDLKTLECLNEALNALYQQSDLKGLLITSDKDAFIVGADITEFLGLFAKPAEELSQWLTRANDIFNKLEDLPVPTLSAINGHALGGGCECVLATDFRLADITARIGLPETRLGIMPGFGGTVRLPRLLGADSAMEIITAGKDKKAQDALKLGLVDAVVAPTALKDAALSMIKDAIAGKLDWQKRRAQKKAPLTLNKIEATMSFTMAKAMVAQVAGKHYPAPMTAVIAIEAAARMSRDEALVVENKHFITLAKTDVAQSLVGIFLNDQYIKGKAKKAAKEGQPTKKGVVLGAGIMGGGIAYQSALKGVPVLMKDIAVPSLDLGMAEAAKLLNKQLERGRIDGVKMAKVLSGITPSLHYAGAEDADIVVEAVVENPKIKAAVLAEVESNVSDTTVIASNTSTIPINLLAQSLKRPENFCGMHFFNPVHRMPLVEIIRGEHTSEETISRVVAYAAKMGKSPIVVNDCPGFFVNRVLFPYFAGFSLLLRDGADFTQVDKVMEKQFGWPMGPAYLLDVVGIDTAHHAQAVMAEGFPDRMGKNYKDAVDVMFEQQRFGQKNGNGFFAYSVDRRGKPKKNVDPAVAELLAPVLGAATDFTSDEIIARMMIPMINEVVRCLEECIIATPAEADMALVYGLGFPPFRGGVFRYIDTLGLAEYVAMADKFAHLGAVYEVPTGLREKAAKGESYYTQQVNA</sequence>
<keyword id="KW-0276">Fatty acid metabolism</keyword>
<keyword id="KW-0413">Isomerase</keyword>
<keyword id="KW-0442">Lipid degradation</keyword>
<keyword id="KW-0443">Lipid metabolism</keyword>
<keyword id="KW-0456">Lyase</keyword>
<keyword id="KW-0511">Multifunctional enzyme</keyword>
<keyword id="KW-0520">NAD</keyword>
<keyword id="KW-0560">Oxidoreductase</keyword>
<keyword id="KW-1185">Reference proteome</keyword>
<name>FADB_PHOPR</name>
<reference key="1">
    <citation type="journal article" date="2005" name="Science">
        <title>Life at depth: Photobacterium profundum genome sequence and expression analysis.</title>
        <authorList>
            <person name="Vezzi A."/>
            <person name="Campanaro S."/>
            <person name="D'Angelo M."/>
            <person name="Simonato F."/>
            <person name="Vitulo N."/>
            <person name="Lauro F.M."/>
            <person name="Cestaro A."/>
            <person name="Malacrida G."/>
            <person name="Simionati B."/>
            <person name="Cannata N."/>
            <person name="Romualdi C."/>
            <person name="Bartlett D.H."/>
            <person name="Valle G."/>
        </authorList>
    </citation>
    <scope>NUCLEOTIDE SEQUENCE [LARGE SCALE GENOMIC DNA]</scope>
    <source>
        <strain>ATCC BAA-1253 / SS9</strain>
    </source>
</reference>
<organism>
    <name type="scientific">Photobacterium profundum (strain SS9)</name>
    <dbReference type="NCBI Taxonomy" id="298386"/>
    <lineage>
        <taxon>Bacteria</taxon>
        <taxon>Pseudomonadati</taxon>
        <taxon>Pseudomonadota</taxon>
        <taxon>Gammaproteobacteria</taxon>
        <taxon>Vibrionales</taxon>
        <taxon>Vibrionaceae</taxon>
        <taxon>Photobacterium</taxon>
    </lineage>
</organism>
<proteinExistence type="inferred from homology"/>
<comment type="function">
    <text evidence="1">Involved in the aerobic and anaerobic degradation of long-chain fatty acids via beta-oxidation cycle. Catalyzes the formation of 3-oxoacyl-CoA from enoyl-CoA via L-3-hydroxyacyl-CoA. It can also use D-3-hydroxyacyl-CoA and cis-3-enoyl-CoA as substrate.</text>
</comment>
<comment type="catalytic activity">
    <reaction evidence="1">
        <text>a (3S)-3-hydroxyacyl-CoA + NAD(+) = a 3-oxoacyl-CoA + NADH + H(+)</text>
        <dbReference type="Rhea" id="RHEA:22432"/>
        <dbReference type="ChEBI" id="CHEBI:15378"/>
        <dbReference type="ChEBI" id="CHEBI:57318"/>
        <dbReference type="ChEBI" id="CHEBI:57540"/>
        <dbReference type="ChEBI" id="CHEBI:57945"/>
        <dbReference type="ChEBI" id="CHEBI:90726"/>
        <dbReference type="EC" id="1.1.1.35"/>
    </reaction>
</comment>
<comment type="catalytic activity">
    <reaction evidence="1">
        <text>a (3S)-3-hydroxyacyl-CoA = a (2E)-enoyl-CoA + H2O</text>
        <dbReference type="Rhea" id="RHEA:16105"/>
        <dbReference type="ChEBI" id="CHEBI:15377"/>
        <dbReference type="ChEBI" id="CHEBI:57318"/>
        <dbReference type="ChEBI" id="CHEBI:58856"/>
        <dbReference type="EC" id="4.2.1.17"/>
    </reaction>
</comment>
<comment type="catalytic activity">
    <reaction evidence="1">
        <text>a 4-saturated-(3S)-3-hydroxyacyl-CoA = a (3E)-enoyl-CoA + H2O</text>
        <dbReference type="Rhea" id="RHEA:20724"/>
        <dbReference type="ChEBI" id="CHEBI:15377"/>
        <dbReference type="ChEBI" id="CHEBI:58521"/>
        <dbReference type="ChEBI" id="CHEBI:137480"/>
        <dbReference type="EC" id="4.2.1.17"/>
    </reaction>
</comment>
<comment type="catalytic activity">
    <reaction evidence="1">
        <text>(3S)-3-hydroxybutanoyl-CoA = (3R)-3-hydroxybutanoyl-CoA</text>
        <dbReference type="Rhea" id="RHEA:21760"/>
        <dbReference type="ChEBI" id="CHEBI:57315"/>
        <dbReference type="ChEBI" id="CHEBI:57316"/>
        <dbReference type="EC" id="5.1.2.3"/>
    </reaction>
</comment>
<comment type="catalytic activity">
    <reaction evidence="1">
        <text>a (3Z)-enoyl-CoA = a 4-saturated (2E)-enoyl-CoA</text>
        <dbReference type="Rhea" id="RHEA:45900"/>
        <dbReference type="ChEBI" id="CHEBI:85097"/>
        <dbReference type="ChEBI" id="CHEBI:85489"/>
        <dbReference type="EC" id="5.3.3.8"/>
    </reaction>
</comment>
<comment type="catalytic activity">
    <reaction evidence="1">
        <text>a (3E)-enoyl-CoA = a 4-saturated (2E)-enoyl-CoA</text>
        <dbReference type="Rhea" id="RHEA:45228"/>
        <dbReference type="ChEBI" id="CHEBI:58521"/>
        <dbReference type="ChEBI" id="CHEBI:85097"/>
        <dbReference type="EC" id="5.3.3.8"/>
    </reaction>
</comment>
<comment type="pathway">
    <text evidence="1">Lipid metabolism; fatty acid beta-oxidation.</text>
</comment>
<comment type="subunit">
    <text evidence="1">Heterotetramer of two alpha chains (FadB) and two beta chains (FadA).</text>
</comment>
<comment type="similarity">
    <text evidence="1">In the N-terminal section; belongs to the enoyl-CoA hydratase/isomerase family.</text>
</comment>
<comment type="similarity">
    <text evidence="1">In the C-terminal section; belongs to the 3-hydroxyacyl-CoA dehydrogenase family.</text>
</comment>
<protein>
    <recommendedName>
        <fullName evidence="1">Fatty acid oxidation complex subunit alpha</fullName>
    </recommendedName>
    <domain>
        <recommendedName>
            <fullName evidence="1">Enoyl-CoA hydratase/Delta(3)-cis-Delta(2)-trans-enoyl-CoA isomerase/3-hydroxybutyryl-CoA epimerase</fullName>
            <ecNumber evidence="1">4.2.1.17</ecNumber>
            <ecNumber evidence="1">5.1.2.3</ecNumber>
            <ecNumber evidence="1">5.3.3.8</ecNumber>
        </recommendedName>
    </domain>
    <domain>
        <recommendedName>
            <fullName evidence="1">3-hydroxyacyl-CoA dehydrogenase</fullName>
            <ecNumber evidence="1">1.1.1.35</ecNumber>
        </recommendedName>
    </domain>
</protein>
<accession>Q6LW06</accession>
<evidence type="ECO:0000255" key="1">
    <source>
        <dbReference type="HAMAP-Rule" id="MF_01621"/>
    </source>
</evidence>